<proteinExistence type="inferred from homology"/>
<accession>Q4QN08</accession>
<evidence type="ECO:0000255" key="1">
    <source>
        <dbReference type="HAMAP-Rule" id="MF_01954"/>
    </source>
</evidence>
<name>URE2_HAEI8</name>
<comment type="catalytic activity">
    <reaction evidence="1">
        <text>urea + 2 H2O + H(+) = hydrogencarbonate + 2 NH4(+)</text>
        <dbReference type="Rhea" id="RHEA:20557"/>
        <dbReference type="ChEBI" id="CHEBI:15377"/>
        <dbReference type="ChEBI" id="CHEBI:15378"/>
        <dbReference type="ChEBI" id="CHEBI:16199"/>
        <dbReference type="ChEBI" id="CHEBI:17544"/>
        <dbReference type="ChEBI" id="CHEBI:28938"/>
        <dbReference type="EC" id="3.5.1.5"/>
    </reaction>
</comment>
<comment type="pathway">
    <text evidence="1">Nitrogen metabolism; urea degradation; CO(2) and NH(3) from urea (urease route): step 1/1.</text>
</comment>
<comment type="subunit">
    <text evidence="1">Heterotrimer of UreA (gamma), UreB (beta) and UreC (alpha) subunits. Three heterotrimers associate to form the active enzyme.</text>
</comment>
<comment type="subcellular location">
    <subcellularLocation>
        <location evidence="1">Cytoplasm</location>
    </subcellularLocation>
</comment>
<comment type="similarity">
    <text evidence="1">Belongs to the urease beta subunit family.</text>
</comment>
<protein>
    <recommendedName>
        <fullName evidence="1">Urease subunit beta</fullName>
        <ecNumber evidence="1">3.5.1.5</ecNumber>
    </recommendedName>
    <alternativeName>
        <fullName evidence="1">Urea amidohydrolase subunit beta</fullName>
    </alternativeName>
</protein>
<reference key="1">
    <citation type="journal article" date="2005" name="J. Bacteriol.">
        <title>Genomic sequence of an otitis media isolate of nontypeable Haemophilus influenzae: comparative study with H. influenzae serotype d, strain KW20.</title>
        <authorList>
            <person name="Harrison A."/>
            <person name="Dyer D.W."/>
            <person name="Gillaspy A."/>
            <person name="Ray W.C."/>
            <person name="Mungur R."/>
            <person name="Carson M.B."/>
            <person name="Zhong H."/>
            <person name="Gipson J."/>
            <person name="Gipson M."/>
            <person name="Johnson L.S."/>
            <person name="Lewis L."/>
            <person name="Bakaletz L.O."/>
            <person name="Munson R.S. Jr."/>
        </authorList>
    </citation>
    <scope>NUCLEOTIDE SEQUENCE [LARGE SCALE GENOMIC DNA]</scope>
    <source>
        <strain>86-028NP</strain>
    </source>
</reference>
<keyword id="KW-0963">Cytoplasm</keyword>
<keyword id="KW-0378">Hydrolase</keyword>
<organism>
    <name type="scientific">Haemophilus influenzae (strain 86-028NP)</name>
    <dbReference type="NCBI Taxonomy" id="281310"/>
    <lineage>
        <taxon>Bacteria</taxon>
        <taxon>Pseudomonadati</taxon>
        <taxon>Pseudomonadota</taxon>
        <taxon>Gammaproteobacteria</taxon>
        <taxon>Pasteurellales</taxon>
        <taxon>Pasteurellaceae</taxon>
        <taxon>Haemophilus</taxon>
    </lineage>
</organism>
<sequence>MIPGEYQLAEGDILANVGRKTVKIEVTNSGDRPIQVGSHYHFFETNNALKFDRTLARGMRLNVPSGNAVRFEPGEVKSVELVAFGGNQIIYGFHNQIDGKL</sequence>
<gene>
    <name evidence="1" type="primary">ureB</name>
    <name type="ordered locus">NTHI0666</name>
</gene>
<feature type="chain" id="PRO_0000234250" description="Urease subunit beta">
    <location>
        <begin position="1"/>
        <end position="101"/>
    </location>
</feature>
<dbReference type="EC" id="3.5.1.5" evidence="1"/>
<dbReference type="EMBL" id="CP000057">
    <property type="protein sequence ID" value="AAX87589.1"/>
    <property type="molecule type" value="Genomic_DNA"/>
</dbReference>
<dbReference type="RefSeq" id="WP_005687041.1">
    <property type="nucleotide sequence ID" value="NC_007146.2"/>
</dbReference>
<dbReference type="SMR" id="Q4QN08"/>
<dbReference type="KEGG" id="hit:NTHI0666"/>
<dbReference type="HOGENOM" id="CLU_129707_1_1_6"/>
<dbReference type="UniPathway" id="UPA00258">
    <property type="reaction ID" value="UER00370"/>
</dbReference>
<dbReference type="Proteomes" id="UP000002525">
    <property type="component" value="Chromosome"/>
</dbReference>
<dbReference type="GO" id="GO:0035550">
    <property type="term" value="C:urease complex"/>
    <property type="evidence" value="ECO:0007669"/>
    <property type="project" value="InterPro"/>
</dbReference>
<dbReference type="GO" id="GO:0009039">
    <property type="term" value="F:urease activity"/>
    <property type="evidence" value="ECO:0007669"/>
    <property type="project" value="UniProtKB-UniRule"/>
</dbReference>
<dbReference type="GO" id="GO:0043419">
    <property type="term" value="P:urea catabolic process"/>
    <property type="evidence" value="ECO:0007669"/>
    <property type="project" value="UniProtKB-UniRule"/>
</dbReference>
<dbReference type="CDD" id="cd00407">
    <property type="entry name" value="Urease_beta"/>
    <property type="match status" value="1"/>
</dbReference>
<dbReference type="FunFam" id="2.10.150.10:FF:000001">
    <property type="entry name" value="Urease subunit beta"/>
    <property type="match status" value="1"/>
</dbReference>
<dbReference type="Gene3D" id="2.10.150.10">
    <property type="entry name" value="Urease, beta subunit"/>
    <property type="match status" value="1"/>
</dbReference>
<dbReference type="HAMAP" id="MF_01954">
    <property type="entry name" value="Urease_beta"/>
    <property type="match status" value="1"/>
</dbReference>
<dbReference type="InterPro" id="IPR002019">
    <property type="entry name" value="Urease_beta-like"/>
</dbReference>
<dbReference type="InterPro" id="IPR036461">
    <property type="entry name" value="Urease_betasu_sf"/>
</dbReference>
<dbReference type="InterPro" id="IPR050069">
    <property type="entry name" value="Urease_subunit"/>
</dbReference>
<dbReference type="NCBIfam" id="NF009682">
    <property type="entry name" value="PRK13203.1"/>
    <property type="match status" value="1"/>
</dbReference>
<dbReference type="NCBIfam" id="TIGR00192">
    <property type="entry name" value="urease_beta"/>
    <property type="match status" value="1"/>
</dbReference>
<dbReference type="PANTHER" id="PTHR33569">
    <property type="entry name" value="UREASE"/>
    <property type="match status" value="1"/>
</dbReference>
<dbReference type="PANTHER" id="PTHR33569:SF1">
    <property type="entry name" value="UREASE"/>
    <property type="match status" value="1"/>
</dbReference>
<dbReference type="Pfam" id="PF00699">
    <property type="entry name" value="Urease_beta"/>
    <property type="match status" value="1"/>
</dbReference>
<dbReference type="SUPFAM" id="SSF51278">
    <property type="entry name" value="Urease, beta-subunit"/>
    <property type="match status" value="1"/>
</dbReference>